<sequence>MKTKILLLNFIIIFFLINVNLAIKKDSPFKEIQKNNNNKKENHDAINYYEDEDGFDVTIKDCISILVPYGKCTKIKSPFKKCPYKSIFISSNSTTPIIPNNNYNNNNNNKNKNNGSNQYIINLFENSKCYEKVNRNKNKIFKNFHEEKNYKESKKNELIINCKDKKLNKFNNNEIRVVCPISSKFDSSTSSISINTLAILSLLFLIFINKLIN</sequence>
<gene>
    <name type="ORF">DDB_G0267860</name>
</gene>
<accession>Q55G23</accession>
<evidence type="ECO:0000255" key="1"/>
<evidence type="ECO:0000305" key="2"/>
<comment type="subcellular location">
    <subcellularLocation>
        <location evidence="2">Membrane</location>
        <topology evidence="2">Single-pass type I membrane protein</topology>
    </subcellularLocation>
</comment>
<dbReference type="EMBL" id="AAFI02000003">
    <property type="protein sequence ID" value="EAL73383.1"/>
    <property type="molecule type" value="Genomic_DNA"/>
</dbReference>
<dbReference type="RefSeq" id="XP_647360.1">
    <property type="nucleotide sequence ID" value="XM_642268.1"/>
</dbReference>
<dbReference type="GlyGen" id="Q55G23">
    <property type="glycosylation" value="2 sites"/>
</dbReference>
<dbReference type="PaxDb" id="44689-DDB0189596"/>
<dbReference type="EnsemblProtists" id="EAL73383">
    <property type="protein sequence ID" value="EAL73383"/>
    <property type="gene ID" value="DDB_G0267860"/>
</dbReference>
<dbReference type="GeneID" id="8616171"/>
<dbReference type="KEGG" id="ddi:DDB_G0267860"/>
<dbReference type="dictyBase" id="DDB_G0267860"/>
<dbReference type="VEuPathDB" id="AmoebaDB:DDB_G0267860"/>
<dbReference type="HOGENOM" id="CLU_1296440_0_0_1"/>
<dbReference type="InParanoid" id="Q55G23"/>
<dbReference type="PRO" id="PR:Q55G23"/>
<dbReference type="Proteomes" id="UP000002195">
    <property type="component" value="Chromosome 1"/>
</dbReference>
<dbReference type="GO" id="GO:0016020">
    <property type="term" value="C:membrane"/>
    <property type="evidence" value="ECO:0007669"/>
    <property type="project" value="UniProtKB-SubCell"/>
</dbReference>
<name>Y9596_DICDI</name>
<protein>
    <recommendedName>
        <fullName>Putative transmembrane protein DDB_G0267860</fullName>
    </recommendedName>
</protein>
<proteinExistence type="inferred from homology"/>
<keyword id="KW-0325">Glycoprotein</keyword>
<keyword id="KW-0472">Membrane</keyword>
<keyword id="KW-1185">Reference proteome</keyword>
<keyword id="KW-0732">Signal</keyword>
<keyword id="KW-0812">Transmembrane</keyword>
<keyword id="KW-1133">Transmembrane helix</keyword>
<organism>
    <name type="scientific">Dictyostelium discoideum</name>
    <name type="common">Social amoeba</name>
    <dbReference type="NCBI Taxonomy" id="44689"/>
    <lineage>
        <taxon>Eukaryota</taxon>
        <taxon>Amoebozoa</taxon>
        <taxon>Evosea</taxon>
        <taxon>Eumycetozoa</taxon>
        <taxon>Dictyostelia</taxon>
        <taxon>Dictyosteliales</taxon>
        <taxon>Dictyosteliaceae</taxon>
        <taxon>Dictyostelium</taxon>
    </lineage>
</organism>
<feature type="signal peptide" evidence="1">
    <location>
        <begin position="1"/>
        <end position="22"/>
    </location>
</feature>
<feature type="chain" id="PRO_0000348202" description="Putative transmembrane protein DDB_G0267860">
    <location>
        <begin position="23"/>
        <end position="213"/>
    </location>
</feature>
<feature type="topological domain" description="Extracellular" evidence="1">
    <location>
        <begin position="23"/>
        <end position="191"/>
    </location>
</feature>
<feature type="transmembrane region" description="Helical" evidence="1">
    <location>
        <begin position="192"/>
        <end position="212"/>
    </location>
</feature>
<feature type="topological domain" description="Cytoplasmic" evidence="1">
    <location>
        <position position="213"/>
    </location>
</feature>
<feature type="glycosylation site" description="N-linked (GlcNAc...) asparagine" evidence="1">
    <location>
        <position position="92"/>
    </location>
</feature>
<feature type="glycosylation site" description="N-linked (GlcNAc...) asparagine" evidence="1">
    <location>
        <position position="114"/>
    </location>
</feature>
<reference key="1">
    <citation type="journal article" date="2005" name="Nature">
        <title>The genome of the social amoeba Dictyostelium discoideum.</title>
        <authorList>
            <person name="Eichinger L."/>
            <person name="Pachebat J.A."/>
            <person name="Gloeckner G."/>
            <person name="Rajandream M.A."/>
            <person name="Sucgang R."/>
            <person name="Berriman M."/>
            <person name="Song J."/>
            <person name="Olsen R."/>
            <person name="Szafranski K."/>
            <person name="Xu Q."/>
            <person name="Tunggal B."/>
            <person name="Kummerfeld S."/>
            <person name="Madera M."/>
            <person name="Konfortov B.A."/>
            <person name="Rivero F."/>
            <person name="Bankier A.T."/>
            <person name="Lehmann R."/>
            <person name="Hamlin N."/>
            <person name="Davies R."/>
            <person name="Gaudet P."/>
            <person name="Fey P."/>
            <person name="Pilcher K."/>
            <person name="Chen G."/>
            <person name="Saunders D."/>
            <person name="Sodergren E.J."/>
            <person name="Davis P."/>
            <person name="Kerhornou A."/>
            <person name="Nie X."/>
            <person name="Hall N."/>
            <person name="Anjard C."/>
            <person name="Hemphill L."/>
            <person name="Bason N."/>
            <person name="Farbrother P."/>
            <person name="Desany B."/>
            <person name="Just E."/>
            <person name="Morio T."/>
            <person name="Rost R."/>
            <person name="Churcher C.M."/>
            <person name="Cooper J."/>
            <person name="Haydock S."/>
            <person name="van Driessche N."/>
            <person name="Cronin A."/>
            <person name="Goodhead I."/>
            <person name="Muzny D.M."/>
            <person name="Mourier T."/>
            <person name="Pain A."/>
            <person name="Lu M."/>
            <person name="Harper D."/>
            <person name="Lindsay R."/>
            <person name="Hauser H."/>
            <person name="James K.D."/>
            <person name="Quiles M."/>
            <person name="Madan Babu M."/>
            <person name="Saito T."/>
            <person name="Buchrieser C."/>
            <person name="Wardroper A."/>
            <person name="Felder M."/>
            <person name="Thangavelu M."/>
            <person name="Johnson D."/>
            <person name="Knights A."/>
            <person name="Loulseged H."/>
            <person name="Mungall K.L."/>
            <person name="Oliver K."/>
            <person name="Price C."/>
            <person name="Quail M.A."/>
            <person name="Urushihara H."/>
            <person name="Hernandez J."/>
            <person name="Rabbinowitsch E."/>
            <person name="Steffen D."/>
            <person name="Sanders M."/>
            <person name="Ma J."/>
            <person name="Kohara Y."/>
            <person name="Sharp S."/>
            <person name="Simmonds M.N."/>
            <person name="Spiegler S."/>
            <person name="Tivey A."/>
            <person name="Sugano S."/>
            <person name="White B."/>
            <person name="Walker D."/>
            <person name="Woodward J.R."/>
            <person name="Winckler T."/>
            <person name="Tanaka Y."/>
            <person name="Shaulsky G."/>
            <person name="Schleicher M."/>
            <person name="Weinstock G.M."/>
            <person name="Rosenthal A."/>
            <person name="Cox E.C."/>
            <person name="Chisholm R.L."/>
            <person name="Gibbs R.A."/>
            <person name="Loomis W.F."/>
            <person name="Platzer M."/>
            <person name="Kay R.R."/>
            <person name="Williams J.G."/>
            <person name="Dear P.H."/>
            <person name="Noegel A.A."/>
            <person name="Barrell B.G."/>
            <person name="Kuspa A."/>
        </authorList>
    </citation>
    <scope>NUCLEOTIDE SEQUENCE [LARGE SCALE GENOMIC DNA]</scope>
    <source>
        <strain>AX4</strain>
    </source>
</reference>